<proteinExistence type="inferred from homology"/>
<name>CYB_PHYAH</name>
<geneLocation type="mitochondrion"/>
<feature type="chain" id="PRO_0000061394" description="Cytochrome b">
    <location>
        <begin position="1"/>
        <end position="379"/>
    </location>
</feature>
<feature type="transmembrane region" description="Helical" evidence="2">
    <location>
        <begin position="33"/>
        <end position="53"/>
    </location>
</feature>
<feature type="transmembrane region" description="Helical" evidence="2">
    <location>
        <begin position="77"/>
        <end position="98"/>
    </location>
</feature>
<feature type="transmembrane region" description="Helical" evidence="2">
    <location>
        <begin position="113"/>
        <end position="133"/>
    </location>
</feature>
<feature type="transmembrane region" description="Helical" evidence="2">
    <location>
        <begin position="178"/>
        <end position="198"/>
    </location>
</feature>
<feature type="transmembrane region" description="Helical" evidence="2">
    <location>
        <begin position="226"/>
        <end position="246"/>
    </location>
</feature>
<feature type="transmembrane region" description="Helical" evidence="2">
    <location>
        <begin position="288"/>
        <end position="308"/>
    </location>
</feature>
<feature type="transmembrane region" description="Helical" evidence="2">
    <location>
        <begin position="320"/>
        <end position="340"/>
    </location>
</feature>
<feature type="transmembrane region" description="Helical" evidence="2">
    <location>
        <begin position="347"/>
        <end position="367"/>
    </location>
</feature>
<feature type="binding site" description="axial binding residue" evidence="2">
    <location>
        <position position="83"/>
    </location>
    <ligand>
        <name>heme b</name>
        <dbReference type="ChEBI" id="CHEBI:60344"/>
        <label>b562</label>
    </ligand>
    <ligandPart>
        <name>Fe</name>
        <dbReference type="ChEBI" id="CHEBI:18248"/>
    </ligandPart>
</feature>
<feature type="binding site" description="axial binding residue" evidence="2">
    <location>
        <position position="97"/>
    </location>
    <ligand>
        <name>heme b</name>
        <dbReference type="ChEBI" id="CHEBI:60344"/>
        <label>b566</label>
    </ligand>
    <ligandPart>
        <name>Fe</name>
        <dbReference type="ChEBI" id="CHEBI:18248"/>
    </ligandPart>
</feature>
<feature type="binding site" description="axial binding residue" evidence="2">
    <location>
        <position position="182"/>
    </location>
    <ligand>
        <name>heme b</name>
        <dbReference type="ChEBI" id="CHEBI:60344"/>
        <label>b562</label>
    </ligand>
    <ligandPart>
        <name>Fe</name>
        <dbReference type="ChEBI" id="CHEBI:18248"/>
    </ligandPart>
</feature>
<feature type="binding site" description="axial binding residue" evidence="2">
    <location>
        <position position="196"/>
    </location>
    <ligand>
        <name>heme b</name>
        <dbReference type="ChEBI" id="CHEBI:60344"/>
        <label>b566</label>
    </ligand>
    <ligandPart>
        <name>Fe</name>
        <dbReference type="ChEBI" id="CHEBI:18248"/>
    </ligandPart>
</feature>
<feature type="binding site" evidence="2">
    <location>
        <position position="201"/>
    </location>
    <ligand>
        <name>a ubiquinone</name>
        <dbReference type="ChEBI" id="CHEBI:16389"/>
    </ligand>
</feature>
<accession>Q9GAM6</accession>
<dbReference type="EMBL" id="AF187033">
    <property type="protein sequence ID" value="AAG25914.1"/>
    <property type="molecule type" value="Genomic_DNA"/>
</dbReference>
<dbReference type="SMR" id="Q9GAM6"/>
<dbReference type="GO" id="GO:0005743">
    <property type="term" value="C:mitochondrial inner membrane"/>
    <property type="evidence" value="ECO:0007669"/>
    <property type="project" value="UniProtKB-SubCell"/>
</dbReference>
<dbReference type="GO" id="GO:0045275">
    <property type="term" value="C:respiratory chain complex III"/>
    <property type="evidence" value="ECO:0007669"/>
    <property type="project" value="InterPro"/>
</dbReference>
<dbReference type="GO" id="GO:0046872">
    <property type="term" value="F:metal ion binding"/>
    <property type="evidence" value="ECO:0007669"/>
    <property type="project" value="UniProtKB-KW"/>
</dbReference>
<dbReference type="GO" id="GO:0008121">
    <property type="term" value="F:ubiquinol-cytochrome-c reductase activity"/>
    <property type="evidence" value="ECO:0007669"/>
    <property type="project" value="InterPro"/>
</dbReference>
<dbReference type="GO" id="GO:0006122">
    <property type="term" value="P:mitochondrial electron transport, ubiquinol to cytochrome c"/>
    <property type="evidence" value="ECO:0007669"/>
    <property type="project" value="TreeGrafter"/>
</dbReference>
<dbReference type="CDD" id="cd00290">
    <property type="entry name" value="cytochrome_b_C"/>
    <property type="match status" value="1"/>
</dbReference>
<dbReference type="CDD" id="cd00284">
    <property type="entry name" value="Cytochrome_b_N"/>
    <property type="match status" value="1"/>
</dbReference>
<dbReference type="FunFam" id="1.20.810.10:FF:000002">
    <property type="entry name" value="Cytochrome b"/>
    <property type="match status" value="1"/>
</dbReference>
<dbReference type="Gene3D" id="1.20.810.10">
    <property type="entry name" value="Cytochrome Bc1 Complex, Chain C"/>
    <property type="match status" value="1"/>
</dbReference>
<dbReference type="InterPro" id="IPR005798">
    <property type="entry name" value="Cyt_b/b6_C"/>
</dbReference>
<dbReference type="InterPro" id="IPR036150">
    <property type="entry name" value="Cyt_b/b6_C_sf"/>
</dbReference>
<dbReference type="InterPro" id="IPR005797">
    <property type="entry name" value="Cyt_b/b6_N"/>
</dbReference>
<dbReference type="InterPro" id="IPR027387">
    <property type="entry name" value="Cytb/b6-like_sf"/>
</dbReference>
<dbReference type="InterPro" id="IPR030689">
    <property type="entry name" value="Cytochrome_b"/>
</dbReference>
<dbReference type="InterPro" id="IPR048260">
    <property type="entry name" value="Cytochrome_b_C_euk/bac"/>
</dbReference>
<dbReference type="InterPro" id="IPR048259">
    <property type="entry name" value="Cytochrome_b_N_euk/bac"/>
</dbReference>
<dbReference type="InterPro" id="IPR016174">
    <property type="entry name" value="Di-haem_cyt_TM"/>
</dbReference>
<dbReference type="PANTHER" id="PTHR19271">
    <property type="entry name" value="CYTOCHROME B"/>
    <property type="match status" value="1"/>
</dbReference>
<dbReference type="PANTHER" id="PTHR19271:SF16">
    <property type="entry name" value="CYTOCHROME B"/>
    <property type="match status" value="1"/>
</dbReference>
<dbReference type="Pfam" id="PF00032">
    <property type="entry name" value="Cytochrom_B_C"/>
    <property type="match status" value="1"/>
</dbReference>
<dbReference type="Pfam" id="PF00033">
    <property type="entry name" value="Cytochrome_B"/>
    <property type="match status" value="1"/>
</dbReference>
<dbReference type="PIRSF" id="PIRSF038885">
    <property type="entry name" value="COB"/>
    <property type="match status" value="1"/>
</dbReference>
<dbReference type="SUPFAM" id="SSF81648">
    <property type="entry name" value="a domain/subunit of cytochrome bc1 complex (Ubiquinol-cytochrome c reductase)"/>
    <property type="match status" value="1"/>
</dbReference>
<dbReference type="SUPFAM" id="SSF81342">
    <property type="entry name" value="Transmembrane di-heme cytochromes"/>
    <property type="match status" value="1"/>
</dbReference>
<dbReference type="PROSITE" id="PS51003">
    <property type="entry name" value="CYTB_CTER"/>
    <property type="match status" value="1"/>
</dbReference>
<dbReference type="PROSITE" id="PS51002">
    <property type="entry name" value="CYTB_NTER"/>
    <property type="match status" value="1"/>
</dbReference>
<reference key="1">
    <citation type="journal article" date="1999" name="J. Mammal.">
        <title>Systematics of the genera Carollia and Rhinophylla based on the cytochrome b gene.</title>
        <authorList>
            <person name="Wright A.J."/>
            <person name="Van Den Bussche R.A."/>
            <person name="Lim B.K."/>
            <person name="Engstrom M.D."/>
            <person name="Baker R.J."/>
        </authorList>
    </citation>
    <scope>NUCLEOTIDE SEQUENCE [GENOMIC DNA]</scope>
    <source>
        <strain>Isolate TK 9280</strain>
    </source>
</reference>
<evidence type="ECO:0000250" key="1"/>
<evidence type="ECO:0000250" key="2">
    <source>
        <dbReference type="UniProtKB" id="P00157"/>
    </source>
</evidence>
<evidence type="ECO:0000255" key="3">
    <source>
        <dbReference type="PROSITE-ProRule" id="PRU00967"/>
    </source>
</evidence>
<evidence type="ECO:0000255" key="4">
    <source>
        <dbReference type="PROSITE-ProRule" id="PRU00968"/>
    </source>
</evidence>
<organism>
    <name type="scientific">Phyllonycteris aphylla</name>
    <name type="common">Jamaican flower bat</name>
    <dbReference type="NCBI Taxonomy" id="138702"/>
    <lineage>
        <taxon>Eukaryota</taxon>
        <taxon>Metazoa</taxon>
        <taxon>Chordata</taxon>
        <taxon>Craniata</taxon>
        <taxon>Vertebrata</taxon>
        <taxon>Euteleostomi</taxon>
        <taxon>Mammalia</taxon>
        <taxon>Eutheria</taxon>
        <taxon>Laurasiatheria</taxon>
        <taxon>Chiroptera</taxon>
        <taxon>Yangochiroptera</taxon>
        <taxon>Phyllostomidae</taxon>
        <taxon>Phyllonycterinae</taxon>
        <taxon>Phyllonycteris</taxon>
    </lineage>
</organism>
<gene>
    <name type="primary">MT-CYB</name>
    <name type="synonym">COB</name>
    <name type="synonym">CYTB</name>
    <name type="synonym">MTCYB</name>
</gene>
<comment type="function">
    <text evidence="2">Component of the ubiquinol-cytochrome c reductase complex (complex III or cytochrome b-c1 complex) that is part of the mitochondrial respiratory chain. The b-c1 complex mediates electron transfer from ubiquinol to cytochrome c. Contributes to the generation of a proton gradient across the mitochondrial membrane that is then used for ATP synthesis.</text>
</comment>
<comment type="cofactor">
    <cofactor evidence="2">
        <name>heme b</name>
        <dbReference type="ChEBI" id="CHEBI:60344"/>
    </cofactor>
    <text evidence="2">Binds 2 heme b groups non-covalently.</text>
</comment>
<comment type="subunit">
    <text evidence="2">The cytochrome bc1 complex contains 11 subunits: 3 respiratory subunits (MT-CYB, CYC1 and UQCRFS1), 2 core proteins (UQCRC1 and UQCRC2) and 6 low-molecular weight proteins (UQCRH/QCR6, UQCRB/QCR7, UQCRQ/QCR8, UQCR10/QCR9, UQCR11/QCR10 and a cleavage product of UQCRFS1). This cytochrome bc1 complex then forms a dimer.</text>
</comment>
<comment type="subcellular location">
    <subcellularLocation>
        <location evidence="2">Mitochondrion inner membrane</location>
        <topology evidence="2">Multi-pass membrane protein</topology>
    </subcellularLocation>
</comment>
<comment type="miscellaneous">
    <text evidence="1">Heme 1 (or BL or b562) is low-potential and absorbs at about 562 nm, and heme 2 (or BH or b566) is high-potential and absorbs at about 566 nm.</text>
</comment>
<comment type="similarity">
    <text evidence="3 4">Belongs to the cytochrome b family.</text>
</comment>
<comment type="caution">
    <text evidence="2">The full-length protein contains only eight transmembrane helices, not nine as predicted by bioinformatics tools.</text>
</comment>
<keyword id="KW-0249">Electron transport</keyword>
<keyword id="KW-0349">Heme</keyword>
<keyword id="KW-0408">Iron</keyword>
<keyword id="KW-0472">Membrane</keyword>
<keyword id="KW-0479">Metal-binding</keyword>
<keyword id="KW-0496">Mitochondrion</keyword>
<keyword id="KW-0999">Mitochondrion inner membrane</keyword>
<keyword id="KW-0679">Respiratory chain</keyword>
<keyword id="KW-0812">Transmembrane</keyword>
<keyword id="KW-1133">Transmembrane helix</keyword>
<keyword id="KW-0813">Transport</keyword>
<keyword id="KW-0830">Ubiquinone</keyword>
<sequence>MTNIRKTHPLLKIINSSFVDLPAPSSLSSWWNFGSLLGVCLAVQILTGLFLAMHYTSDTATAFNSVTHICRDVNYGWVLRYLHANGASMFFICLYLHIGRGLYYGSYMFTETWNIGILLLFAVMATAFMGYVLPWGQMSFWGATVITNLLSAIPYIGMDLVQWIWGGFSVVKATLTRFFPFHFLLPFIVAALVMVHLLFLHETGSNNPTGIPSDPDMIPFHPYYTIKDILGFLIMLTALSTLVLFSPDLLGDPDNYMPANPLITPPHIKPEWYFLFAYAILRSIPNKLGGVLALVLSILVLAIVPLLHTSKQRSMMFRPLSQCLFWFLVAVLLTLTWIGGQPVEHPYVIIGQVASVLYFLILLVFMPLTSIVENYLLKW</sequence>
<protein>
    <recommendedName>
        <fullName>Cytochrome b</fullName>
    </recommendedName>
    <alternativeName>
        <fullName>Complex III subunit 3</fullName>
    </alternativeName>
    <alternativeName>
        <fullName>Complex III subunit III</fullName>
    </alternativeName>
    <alternativeName>
        <fullName>Cytochrome b-c1 complex subunit 3</fullName>
    </alternativeName>
    <alternativeName>
        <fullName>Ubiquinol-cytochrome-c reductase complex cytochrome b subunit</fullName>
    </alternativeName>
</protein>